<protein>
    <recommendedName>
        <fullName evidence="1">Replication restart protein PriB</fullName>
    </recommendedName>
</protein>
<sequence length="101" mass="11352">MTTNNLVLSGTITRSRRFKSPAGIAHSVIMLEHKSQRYEADMLRNVYVQIQVILSGPRFESVAEDLKAGVEVQVQGFMTLQQGRNGQNRLVIHAENVELKT</sequence>
<proteinExistence type="inferred from homology"/>
<accession>B8E9N7</accession>
<name>PRIB_SHEB2</name>
<gene>
    <name evidence="1" type="primary">priB</name>
    <name type="ordered locus">Sbal223_0733</name>
</gene>
<evidence type="ECO:0000255" key="1">
    <source>
        <dbReference type="HAMAP-Rule" id="MF_00720"/>
    </source>
</evidence>
<feature type="chain" id="PRO_1000192549" description="Replication restart protein PriB">
    <location>
        <begin position="1"/>
        <end position="101"/>
    </location>
</feature>
<feature type="domain" description="SSB" evidence="1">
    <location>
        <begin position="1"/>
        <end position="101"/>
    </location>
</feature>
<reference key="1">
    <citation type="submission" date="2008-12" db="EMBL/GenBank/DDBJ databases">
        <title>Complete sequence of chromosome of Shewanella baltica OS223.</title>
        <authorList>
            <consortium name="US DOE Joint Genome Institute"/>
            <person name="Lucas S."/>
            <person name="Copeland A."/>
            <person name="Lapidus A."/>
            <person name="Glavina del Rio T."/>
            <person name="Dalin E."/>
            <person name="Tice H."/>
            <person name="Bruce D."/>
            <person name="Goodwin L."/>
            <person name="Pitluck S."/>
            <person name="Chertkov O."/>
            <person name="Meincke L."/>
            <person name="Brettin T."/>
            <person name="Detter J.C."/>
            <person name="Han C."/>
            <person name="Kuske C.R."/>
            <person name="Larimer F."/>
            <person name="Land M."/>
            <person name="Hauser L."/>
            <person name="Kyrpides N."/>
            <person name="Ovchinnikova G."/>
            <person name="Brettar I."/>
            <person name="Rodrigues J."/>
            <person name="Konstantinidis K."/>
            <person name="Tiedje J."/>
        </authorList>
    </citation>
    <scope>NUCLEOTIDE SEQUENCE [LARGE SCALE GENOMIC DNA]</scope>
    <source>
        <strain>OS223</strain>
    </source>
</reference>
<organism>
    <name type="scientific">Shewanella baltica (strain OS223)</name>
    <dbReference type="NCBI Taxonomy" id="407976"/>
    <lineage>
        <taxon>Bacteria</taxon>
        <taxon>Pseudomonadati</taxon>
        <taxon>Pseudomonadota</taxon>
        <taxon>Gammaproteobacteria</taxon>
        <taxon>Alteromonadales</taxon>
        <taxon>Shewanellaceae</taxon>
        <taxon>Shewanella</taxon>
    </lineage>
</organism>
<comment type="function">
    <text evidence="1">Involved in the restart of stalled replication forks, which reloads the replicative helicase on sites other than the origin of replication; the PriA-PriB pathway is the major replication restart pathway. During primosome assembly it facilitates complex formation between PriA and DnaT on DNA; stabilizes PriA on DNA. Stimulates the DNA unwinding activity of PriA helicase.</text>
</comment>
<comment type="subunit">
    <text evidence="1">Homodimer. Interacts with PriA and DnaT. Component of the replication restart primosome. Primosome assembly occurs via a 'hand-off' mechanism. PriA binds to replication forks, subsequently PriB then DnaT bind; DnaT then displaces ssDNA to generate the helicase loading substrate.</text>
</comment>
<comment type="similarity">
    <text evidence="1">Belongs to the PriB family.</text>
</comment>
<dbReference type="EMBL" id="CP001252">
    <property type="protein sequence ID" value="ACK45252.1"/>
    <property type="molecule type" value="Genomic_DNA"/>
</dbReference>
<dbReference type="RefSeq" id="WP_006083043.1">
    <property type="nucleotide sequence ID" value="NC_011663.1"/>
</dbReference>
<dbReference type="SMR" id="B8E9N7"/>
<dbReference type="GeneID" id="11771053"/>
<dbReference type="KEGG" id="sbp:Sbal223_0733"/>
<dbReference type="HOGENOM" id="CLU_166075_0_0_6"/>
<dbReference type="Proteomes" id="UP000002507">
    <property type="component" value="Chromosome"/>
</dbReference>
<dbReference type="GO" id="GO:1990077">
    <property type="term" value="C:primosome complex"/>
    <property type="evidence" value="ECO:0007669"/>
    <property type="project" value="UniProtKB-KW"/>
</dbReference>
<dbReference type="GO" id="GO:0003697">
    <property type="term" value="F:single-stranded DNA binding"/>
    <property type="evidence" value="ECO:0007669"/>
    <property type="project" value="UniProtKB-UniRule"/>
</dbReference>
<dbReference type="GO" id="GO:0006269">
    <property type="term" value="P:DNA replication, synthesis of primer"/>
    <property type="evidence" value="ECO:0007669"/>
    <property type="project" value="UniProtKB-KW"/>
</dbReference>
<dbReference type="FunFam" id="2.40.50.140:FF:000332">
    <property type="entry name" value="Primosomal replication protein N"/>
    <property type="match status" value="1"/>
</dbReference>
<dbReference type="Gene3D" id="2.40.50.140">
    <property type="entry name" value="Nucleic acid-binding proteins"/>
    <property type="match status" value="1"/>
</dbReference>
<dbReference type="HAMAP" id="MF_00720">
    <property type="entry name" value="PriB"/>
    <property type="match status" value="1"/>
</dbReference>
<dbReference type="InterPro" id="IPR012340">
    <property type="entry name" value="NA-bd_OB-fold"/>
</dbReference>
<dbReference type="InterPro" id="IPR000424">
    <property type="entry name" value="Primosome_PriB/ssb"/>
</dbReference>
<dbReference type="InterPro" id="IPR023646">
    <property type="entry name" value="Prisomal_replication_PriB"/>
</dbReference>
<dbReference type="NCBIfam" id="TIGR04418">
    <property type="entry name" value="PriB_gamma"/>
    <property type="match status" value="1"/>
</dbReference>
<dbReference type="Pfam" id="PF22657">
    <property type="entry name" value="SSB_1"/>
    <property type="match status" value="1"/>
</dbReference>
<dbReference type="PIRSF" id="PIRSF003135">
    <property type="entry name" value="Primosomal_n"/>
    <property type="match status" value="1"/>
</dbReference>
<dbReference type="SUPFAM" id="SSF50249">
    <property type="entry name" value="Nucleic acid-binding proteins"/>
    <property type="match status" value="1"/>
</dbReference>
<dbReference type="PROSITE" id="PS50935">
    <property type="entry name" value="SSB"/>
    <property type="match status" value="1"/>
</dbReference>
<keyword id="KW-0235">DNA replication</keyword>
<keyword id="KW-0238">DNA-binding</keyword>
<keyword id="KW-0639">Primosome</keyword>